<keyword id="KW-0131">Cell cycle</keyword>
<keyword id="KW-0132">Cell division</keyword>
<keyword id="KW-0143">Chaperone</keyword>
<keyword id="KW-0963">Cytoplasm</keyword>
<keyword id="KW-0413">Isomerase</keyword>
<keyword id="KW-0697">Rotamase</keyword>
<evidence type="ECO:0000255" key="1">
    <source>
        <dbReference type="HAMAP-Rule" id="MF_00303"/>
    </source>
</evidence>
<protein>
    <recommendedName>
        <fullName evidence="1">Trigger factor</fullName>
        <shortName evidence="1">TF</shortName>
        <ecNumber evidence="1">5.2.1.8</ecNumber>
    </recommendedName>
    <alternativeName>
        <fullName evidence="1">PPIase</fullName>
    </alternativeName>
</protein>
<dbReference type="EC" id="5.2.1.8" evidence="1"/>
<dbReference type="EMBL" id="CP001129">
    <property type="protein sequence ID" value="ACG63050.1"/>
    <property type="molecule type" value="Genomic_DNA"/>
</dbReference>
<dbReference type="RefSeq" id="WP_012516305.1">
    <property type="nucleotide sequence ID" value="NC_011134.1"/>
</dbReference>
<dbReference type="SMR" id="B4U4Y3"/>
<dbReference type="KEGG" id="sez:Sez_1723"/>
<dbReference type="HOGENOM" id="CLU_033058_3_2_9"/>
<dbReference type="Proteomes" id="UP000001873">
    <property type="component" value="Chromosome"/>
</dbReference>
<dbReference type="GO" id="GO:0005737">
    <property type="term" value="C:cytoplasm"/>
    <property type="evidence" value="ECO:0007669"/>
    <property type="project" value="UniProtKB-SubCell"/>
</dbReference>
<dbReference type="GO" id="GO:0003755">
    <property type="term" value="F:peptidyl-prolyl cis-trans isomerase activity"/>
    <property type="evidence" value="ECO:0007669"/>
    <property type="project" value="UniProtKB-UniRule"/>
</dbReference>
<dbReference type="GO" id="GO:0044183">
    <property type="term" value="F:protein folding chaperone"/>
    <property type="evidence" value="ECO:0007669"/>
    <property type="project" value="TreeGrafter"/>
</dbReference>
<dbReference type="GO" id="GO:0043022">
    <property type="term" value="F:ribosome binding"/>
    <property type="evidence" value="ECO:0007669"/>
    <property type="project" value="TreeGrafter"/>
</dbReference>
<dbReference type="GO" id="GO:0051083">
    <property type="term" value="P:'de novo' cotranslational protein folding"/>
    <property type="evidence" value="ECO:0007669"/>
    <property type="project" value="TreeGrafter"/>
</dbReference>
<dbReference type="GO" id="GO:0051301">
    <property type="term" value="P:cell division"/>
    <property type="evidence" value="ECO:0007669"/>
    <property type="project" value="UniProtKB-KW"/>
</dbReference>
<dbReference type="GO" id="GO:0061077">
    <property type="term" value="P:chaperone-mediated protein folding"/>
    <property type="evidence" value="ECO:0007669"/>
    <property type="project" value="TreeGrafter"/>
</dbReference>
<dbReference type="GO" id="GO:0015031">
    <property type="term" value="P:protein transport"/>
    <property type="evidence" value="ECO:0007669"/>
    <property type="project" value="UniProtKB-UniRule"/>
</dbReference>
<dbReference type="GO" id="GO:0043335">
    <property type="term" value="P:protein unfolding"/>
    <property type="evidence" value="ECO:0007669"/>
    <property type="project" value="TreeGrafter"/>
</dbReference>
<dbReference type="FunFam" id="3.10.50.40:FF:000001">
    <property type="entry name" value="Trigger factor"/>
    <property type="match status" value="1"/>
</dbReference>
<dbReference type="Gene3D" id="3.10.50.40">
    <property type="match status" value="1"/>
</dbReference>
<dbReference type="Gene3D" id="3.30.70.1050">
    <property type="entry name" value="Trigger factor ribosome-binding domain"/>
    <property type="match status" value="1"/>
</dbReference>
<dbReference type="Gene3D" id="1.10.3120.10">
    <property type="entry name" value="Trigger factor, C-terminal domain"/>
    <property type="match status" value="1"/>
</dbReference>
<dbReference type="HAMAP" id="MF_00303">
    <property type="entry name" value="Trigger_factor_Tig"/>
    <property type="match status" value="1"/>
</dbReference>
<dbReference type="InterPro" id="IPR046357">
    <property type="entry name" value="PPIase_dom_sf"/>
</dbReference>
<dbReference type="InterPro" id="IPR001179">
    <property type="entry name" value="PPIase_FKBP_dom"/>
</dbReference>
<dbReference type="InterPro" id="IPR005215">
    <property type="entry name" value="Trig_fac"/>
</dbReference>
<dbReference type="InterPro" id="IPR008880">
    <property type="entry name" value="Trigger_fac_C"/>
</dbReference>
<dbReference type="InterPro" id="IPR037041">
    <property type="entry name" value="Trigger_fac_C_sf"/>
</dbReference>
<dbReference type="InterPro" id="IPR008881">
    <property type="entry name" value="Trigger_fac_ribosome-bd_bac"/>
</dbReference>
<dbReference type="InterPro" id="IPR036611">
    <property type="entry name" value="Trigger_fac_ribosome-bd_sf"/>
</dbReference>
<dbReference type="InterPro" id="IPR027304">
    <property type="entry name" value="Trigger_fact/SurA_dom_sf"/>
</dbReference>
<dbReference type="NCBIfam" id="TIGR00115">
    <property type="entry name" value="tig"/>
    <property type="match status" value="1"/>
</dbReference>
<dbReference type="PANTHER" id="PTHR30560">
    <property type="entry name" value="TRIGGER FACTOR CHAPERONE AND PEPTIDYL-PROLYL CIS/TRANS ISOMERASE"/>
    <property type="match status" value="1"/>
</dbReference>
<dbReference type="PANTHER" id="PTHR30560:SF3">
    <property type="entry name" value="TRIGGER FACTOR-LIKE PROTEIN TIG, CHLOROPLASTIC"/>
    <property type="match status" value="1"/>
</dbReference>
<dbReference type="Pfam" id="PF00254">
    <property type="entry name" value="FKBP_C"/>
    <property type="match status" value="1"/>
</dbReference>
<dbReference type="Pfam" id="PF05698">
    <property type="entry name" value="Trigger_C"/>
    <property type="match status" value="1"/>
</dbReference>
<dbReference type="Pfam" id="PF05697">
    <property type="entry name" value="Trigger_N"/>
    <property type="match status" value="1"/>
</dbReference>
<dbReference type="PIRSF" id="PIRSF003095">
    <property type="entry name" value="Trigger_factor"/>
    <property type="match status" value="1"/>
</dbReference>
<dbReference type="SUPFAM" id="SSF54534">
    <property type="entry name" value="FKBP-like"/>
    <property type="match status" value="1"/>
</dbReference>
<dbReference type="SUPFAM" id="SSF109998">
    <property type="entry name" value="Triger factor/SurA peptide-binding domain-like"/>
    <property type="match status" value="1"/>
</dbReference>
<dbReference type="SUPFAM" id="SSF102735">
    <property type="entry name" value="Trigger factor ribosome-binding domain"/>
    <property type="match status" value="1"/>
</dbReference>
<dbReference type="PROSITE" id="PS50059">
    <property type="entry name" value="FKBP_PPIASE"/>
    <property type="match status" value="1"/>
</dbReference>
<gene>
    <name evidence="1" type="primary">tig</name>
    <name type="ordered locus">Sez_1723</name>
</gene>
<sequence length="427" mass="47187">MSTSFENKATNRGVITFTISQDKIKPALDQAFNKIKKDLNAPGFRKGHMPRPVFNQRFGEEVLYEEALNIVLPAAYEGAVAELELDVVAQPKIDVVSMEKGQEWTLTAEVVTKPEVKLGDYKDLTVEVEASKEVTDEEVDAKVERERNNLAELVVKEEAAVEGDTVVIDFVGSVDGVEFDGGKGDNFSLELGSGQFIPGFEEQLVGAKAGDTVEVNVTFPENYQAEDLAGKAAKFVTTVHEVKAKEVPELDDELAKDIDEEVETLDELKAKYRKELEASKEAAYDDALEGAAIELAVENAEIVELPEEMVHDEVHRSVNEFMASMQRQGISPDMYFQLTGTSQEDLHKQHEAEADKRVKTNLVIEAIAKAEGFEASDDEIEKEINDLAAEYSMPVEQVRSLLSADMLKHDIVMKKAVEVITSSAKAK</sequence>
<accession>B4U4Y3</accession>
<name>TIG_STREM</name>
<feature type="chain" id="PRO_1000115583" description="Trigger factor">
    <location>
        <begin position="1"/>
        <end position="427"/>
    </location>
</feature>
<feature type="domain" description="PPIase FKBP-type" evidence="1">
    <location>
        <begin position="163"/>
        <end position="248"/>
    </location>
</feature>
<reference key="1">
    <citation type="journal article" date="2008" name="PLoS ONE">
        <title>Genome sequence of a lancefield group C Streptococcus zooepidemicus strain causing epidemic nephritis: new information about an old disease.</title>
        <authorList>
            <person name="Beres S.B."/>
            <person name="Sesso R."/>
            <person name="Pinto S.W.L."/>
            <person name="Hoe N.P."/>
            <person name="Porcella S.F."/>
            <person name="Deleo F.R."/>
            <person name="Musser J.M."/>
        </authorList>
    </citation>
    <scope>NUCLEOTIDE SEQUENCE [LARGE SCALE GENOMIC DNA]</scope>
    <source>
        <strain>MGCS10565</strain>
    </source>
</reference>
<organism>
    <name type="scientific">Streptococcus equi subsp. zooepidemicus (strain MGCS10565)</name>
    <dbReference type="NCBI Taxonomy" id="552526"/>
    <lineage>
        <taxon>Bacteria</taxon>
        <taxon>Bacillati</taxon>
        <taxon>Bacillota</taxon>
        <taxon>Bacilli</taxon>
        <taxon>Lactobacillales</taxon>
        <taxon>Streptococcaceae</taxon>
        <taxon>Streptococcus</taxon>
    </lineage>
</organism>
<comment type="function">
    <text evidence="1">Involved in protein export. Acts as a chaperone by maintaining the newly synthesized protein in an open conformation. Functions as a peptidyl-prolyl cis-trans isomerase.</text>
</comment>
<comment type="catalytic activity">
    <reaction evidence="1">
        <text>[protein]-peptidylproline (omega=180) = [protein]-peptidylproline (omega=0)</text>
        <dbReference type="Rhea" id="RHEA:16237"/>
        <dbReference type="Rhea" id="RHEA-COMP:10747"/>
        <dbReference type="Rhea" id="RHEA-COMP:10748"/>
        <dbReference type="ChEBI" id="CHEBI:83833"/>
        <dbReference type="ChEBI" id="CHEBI:83834"/>
        <dbReference type="EC" id="5.2.1.8"/>
    </reaction>
</comment>
<comment type="subcellular location">
    <subcellularLocation>
        <location>Cytoplasm</location>
    </subcellularLocation>
    <text evidence="1">About half TF is bound to the ribosome near the polypeptide exit tunnel while the other half is free in the cytoplasm.</text>
</comment>
<comment type="domain">
    <text evidence="1">Consists of 3 domains; the N-terminus binds the ribosome, the middle domain has PPIase activity, while the C-terminus has intrinsic chaperone activity on its own.</text>
</comment>
<comment type="similarity">
    <text evidence="1">Belongs to the FKBP-type PPIase family. Tig subfamily.</text>
</comment>
<proteinExistence type="inferred from homology"/>